<dbReference type="EMBL" id="HE601195">
    <property type="protein sequence ID" value="CAP21452.1"/>
    <property type="molecule type" value="Genomic_DNA"/>
</dbReference>
<dbReference type="EMBL" id="HE600999">
    <property type="protein sequence ID" value="CAP22001.1"/>
    <property type="molecule type" value="Genomic_DNA"/>
</dbReference>
<dbReference type="SMR" id="Q627K4"/>
<dbReference type="FunCoup" id="Q627K4">
    <property type="interactions" value="1978"/>
</dbReference>
<dbReference type="STRING" id="6238.Q627K4"/>
<dbReference type="EnsemblMetazoa" id="CBG00634.1">
    <property type="protein sequence ID" value="CBG00634.1"/>
    <property type="gene ID" value="WBGene00024000"/>
</dbReference>
<dbReference type="EnsemblMetazoa" id="CBG24969.1">
    <property type="protein sequence ID" value="CBG24969.1"/>
    <property type="gene ID" value="WBGene00042955"/>
</dbReference>
<dbReference type="KEGG" id="cbr:CBG_00634"/>
<dbReference type="KEGG" id="cbr:CBG_24969"/>
<dbReference type="CTD" id="8571736"/>
<dbReference type="CTD" id="8590629"/>
<dbReference type="WormBase" id="CBG00634">
    <property type="protein sequence ID" value="CBP00190"/>
    <property type="gene ID" value="WBGene00024000"/>
    <property type="gene designation" value="Cbr-evl-20.1"/>
</dbReference>
<dbReference type="WormBase" id="CBG24969">
    <property type="protein sequence ID" value="CBP00190"/>
    <property type="gene ID" value="WBGene00042955"/>
    <property type="gene designation" value="Cbr-evl-20.2"/>
</dbReference>
<dbReference type="eggNOG" id="KOG0073">
    <property type="taxonomic scope" value="Eukaryota"/>
</dbReference>
<dbReference type="HOGENOM" id="CLU_040729_12_3_1"/>
<dbReference type="InParanoid" id="Q627K4"/>
<dbReference type="OMA" id="KTHHWQI"/>
<dbReference type="Proteomes" id="UP000008549">
    <property type="component" value="Unassembled WGS sequence"/>
</dbReference>
<dbReference type="GO" id="GO:0005813">
    <property type="term" value="C:centrosome"/>
    <property type="evidence" value="ECO:0000250"/>
    <property type="project" value="UniProtKB"/>
</dbReference>
<dbReference type="GO" id="GO:0005737">
    <property type="term" value="C:cytoplasm"/>
    <property type="evidence" value="ECO:0000318"/>
    <property type="project" value="GO_Central"/>
</dbReference>
<dbReference type="GO" id="GO:0015630">
    <property type="term" value="C:microtubule cytoskeleton"/>
    <property type="evidence" value="ECO:0000318"/>
    <property type="project" value="GO_Central"/>
</dbReference>
<dbReference type="GO" id="GO:0005886">
    <property type="term" value="C:plasma membrane"/>
    <property type="evidence" value="ECO:0000250"/>
    <property type="project" value="UniProtKB"/>
</dbReference>
<dbReference type="GO" id="GO:0005525">
    <property type="term" value="F:GTP binding"/>
    <property type="evidence" value="ECO:0000318"/>
    <property type="project" value="GO_Central"/>
</dbReference>
<dbReference type="GO" id="GO:0003924">
    <property type="term" value="F:GTPase activity"/>
    <property type="evidence" value="ECO:0007669"/>
    <property type="project" value="InterPro"/>
</dbReference>
<dbReference type="GO" id="GO:0051301">
    <property type="term" value="P:cell division"/>
    <property type="evidence" value="ECO:0007669"/>
    <property type="project" value="UniProtKB-KW"/>
</dbReference>
<dbReference type="GO" id="GO:0043622">
    <property type="term" value="P:cortical microtubule organization"/>
    <property type="evidence" value="ECO:0000250"/>
    <property type="project" value="UniProtKB"/>
</dbReference>
<dbReference type="GO" id="GO:0009792">
    <property type="term" value="P:embryo development ending in birth or egg hatching"/>
    <property type="evidence" value="ECO:0000250"/>
    <property type="project" value="UniProtKB"/>
</dbReference>
<dbReference type="GO" id="GO:0030540">
    <property type="term" value="P:female genitalia development"/>
    <property type="evidence" value="ECO:0000250"/>
    <property type="project" value="UniProtKB"/>
</dbReference>
<dbReference type="GO" id="GO:0006457">
    <property type="term" value="P:protein folding"/>
    <property type="evidence" value="ECO:0000318"/>
    <property type="project" value="GO_Central"/>
</dbReference>
<dbReference type="CDD" id="cd04154">
    <property type="entry name" value="Arl2"/>
    <property type="match status" value="1"/>
</dbReference>
<dbReference type="FunFam" id="3.40.50.300:FF:000981">
    <property type="entry name" value="ADP-ribosylation factor-like 2"/>
    <property type="match status" value="1"/>
</dbReference>
<dbReference type="Gene3D" id="3.40.50.300">
    <property type="entry name" value="P-loop containing nucleotide triphosphate hydrolases"/>
    <property type="match status" value="1"/>
</dbReference>
<dbReference type="InterPro" id="IPR045873">
    <property type="entry name" value="Arl2"/>
</dbReference>
<dbReference type="InterPro" id="IPR044612">
    <property type="entry name" value="ARL2/3"/>
</dbReference>
<dbReference type="InterPro" id="IPR027417">
    <property type="entry name" value="P-loop_NTPase"/>
</dbReference>
<dbReference type="InterPro" id="IPR005225">
    <property type="entry name" value="Small_GTP-bd"/>
</dbReference>
<dbReference type="InterPro" id="IPR006689">
    <property type="entry name" value="Small_GTPase_ARF/SAR"/>
</dbReference>
<dbReference type="NCBIfam" id="TIGR00231">
    <property type="entry name" value="small_GTP"/>
    <property type="match status" value="1"/>
</dbReference>
<dbReference type="PANTHER" id="PTHR45697">
    <property type="entry name" value="ADP-RIBOSYLATION FACTOR-LIKE PROTEIN 2-RELATED"/>
    <property type="match status" value="1"/>
</dbReference>
<dbReference type="Pfam" id="PF00025">
    <property type="entry name" value="Arf"/>
    <property type="match status" value="1"/>
</dbReference>
<dbReference type="PRINTS" id="PR00328">
    <property type="entry name" value="SAR1GTPBP"/>
</dbReference>
<dbReference type="SMART" id="SM00177">
    <property type="entry name" value="ARF"/>
    <property type="match status" value="1"/>
</dbReference>
<dbReference type="SMART" id="SM00175">
    <property type="entry name" value="RAB"/>
    <property type="match status" value="1"/>
</dbReference>
<dbReference type="SMART" id="SM00178">
    <property type="entry name" value="SAR"/>
    <property type="match status" value="1"/>
</dbReference>
<dbReference type="SUPFAM" id="SSF52540">
    <property type="entry name" value="P-loop containing nucleoside triphosphate hydrolases"/>
    <property type="match status" value="1"/>
</dbReference>
<dbReference type="PROSITE" id="PS51417">
    <property type="entry name" value="ARF"/>
    <property type="match status" value="1"/>
</dbReference>
<name>ARL2_CAEBR</name>
<sequence>MGFLKILRKQRAREREMRILILGLDNAGKTTLMKKFLDEPTDTIEPTLGFDIKTVHFKDFQLNLWDVGGQKSLRSYWKNYFESTDALIWVVDSSDRERLTQCSEELKKLLQEERLSGASLLVLANKSDLPGAIDVNSIAQVLELQSIKTHHWKIFSCCALSGERLVQAMTWLCDDVGSRIFILD</sequence>
<reference key="1">
    <citation type="journal article" date="2003" name="PLoS Biol.">
        <title>The genome sequence of Caenorhabditis briggsae: a platform for comparative genomics.</title>
        <authorList>
            <person name="Stein L.D."/>
            <person name="Bao Z."/>
            <person name="Blasiar D."/>
            <person name="Blumenthal T."/>
            <person name="Brent M.R."/>
            <person name="Chen N."/>
            <person name="Chinwalla A."/>
            <person name="Clarke L."/>
            <person name="Clee C."/>
            <person name="Coghlan A."/>
            <person name="Coulson A."/>
            <person name="D'Eustachio P."/>
            <person name="Fitch D.H.A."/>
            <person name="Fulton L.A."/>
            <person name="Fulton R.E."/>
            <person name="Griffiths-Jones S."/>
            <person name="Harris T.W."/>
            <person name="Hillier L.W."/>
            <person name="Kamath R."/>
            <person name="Kuwabara P.E."/>
            <person name="Mardis E.R."/>
            <person name="Marra M.A."/>
            <person name="Miner T.L."/>
            <person name="Minx P."/>
            <person name="Mullikin J.C."/>
            <person name="Plumb R.W."/>
            <person name="Rogers J."/>
            <person name="Schein J.E."/>
            <person name="Sohrmann M."/>
            <person name="Spieth J."/>
            <person name="Stajich J.E."/>
            <person name="Wei C."/>
            <person name="Willey D."/>
            <person name="Wilson R.K."/>
            <person name="Durbin R.M."/>
            <person name="Waterston R.H."/>
        </authorList>
    </citation>
    <scope>NUCLEOTIDE SEQUENCE [LARGE SCALE GENOMIC DNA]</scope>
    <source>
        <strain>AF16</strain>
    </source>
</reference>
<evidence type="ECO:0000250" key="1"/>
<evidence type="ECO:0000250" key="2">
    <source>
        <dbReference type="UniProtKB" id="Q19705"/>
    </source>
</evidence>
<evidence type="ECO:0000250" key="3">
    <source>
        <dbReference type="UniProtKB" id="Q9D0J4"/>
    </source>
</evidence>
<evidence type="ECO:0000255" key="4"/>
<comment type="function">
    <text evidence="2">GTP-binding protein that functions in embryogenesis, cytokinesis, germline development and microtubulule cytoskeleton dynamics.</text>
</comment>
<comment type="subcellular location">
    <subcellularLocation>
        <location evidence="2">Cytoplasm</location>
    </subcellularLocation>
    <subcellularLocation>
        <location evidence="2">Cell membrane</location>
    </subcellularLocation>
    <subcellularLocation>
        <location evidence="1">Cytoplasm</location>
        <location evidence="1">Cytoskeleton</location>
        <location evidence="1">Microtubule organizing center</location>
        <location evidence="1">Centrosome</location>
    </subcellularLocation>
    <text evidence="2">Some diffuse cytoplasmic expression is detected but expression is concentrated mainly next to centrosomes and is excluded from the mitotic spindle area. Localizes to the cortical plasma membrane of embryonic blastomeres (By similarity).</text>
</comment>
<comment type="similarity">
    <text evidence="4">Belongs to the small GTPase superfamily. Arf family.</text>
</comment>
<feature type="initiator methionine" description="Removed" evidence="4">
    <location>
        <position position="1"/>
    </location>
</feature>
<feature type="chain" id="PRO_0000282947" description="ADP-ribosylation factor-like protein 2">
    <location>
        <begin position="2"/>
        <end position="184"/>
    </location>
</feature>
<feature type="binding site" evidence="3">
    <location>
        <begin position="23"/>
        <end position="30"/>
    </location>
    <ligand>
        <name>GTP</name>
        <dbReference type="ChEBI" id="CHEBI:37565"/>
    </ligand>
</feature>
<feature type="binding site" evidence="3">
    <location>
        <begin position="66"/>
        <end position="70"/>
    </location>
    <ligand>
        <name>GTP</name>
        <dbReference type="ChEBI" id="CHEBI:37565"/>
    </ligand>
</feature>
<feature type="binding site" evidence="3">
    <location>
        <position position="68"/>
    </location>
    <ligand>
        <name>GTP</name>
        <dbReference type="ChEBI" id="CHEBI:37565"/>
    </ligand>
</feature>
<feature type="binding site" evidence="3">
    <location>
        <begin position="125"/>
        <end position="128"/>
    </location>
    <ligand>
        <name>GTP</name>
        <dbReference type="ChEBI" id="CHEBI:37565"/>
    </ligand>
</feature>
<feature type="lipid moiety-binding region" description="N-myristoyl glycine" evidence="4">
    <location>
        <position position="2"/>
    </location>
</feature>
<accession>Q627K4</accession>
<accession>A8WLV4</accession>
<proteinExistence type="inferred from homology"/>
<gene>
    <name type="primary">evl-20.1</name>
    <name type="synonym">arl-2.1</name>
    <name type="ORF">CBG00634</name>
</gene>
<gene>
    <name type="primary">evl-20.2</name>
    <name type="synonym">arl-2.2</name>
    <name type="ORF">CBG24969</name>
</gene>
<keyword id="KW-0131">Cell cycle</keyword>
<keyword id="KW-0132">Cell division</keyword>
<keyword id="KW-1003">Cell membrane</keyword>
<keyword id="KW-0963">Cytoplasm</keyword>
<keyword id="KW-0206">Cytoskeleton</keyword>
<keyword id="KW-0217">Developmental protein</keyword>
<keyword id="KW-0342">GTP-binding</keyword>
<keyword id="KW-0449">Lipoprotein</keyword>
<keyword id="KW-0472">Membrane</keyword>
<keyword id="KW-0519">Myristate</keyword>
<keyword id="KW-0547">Nucleotide-binding</keyword>
<keyword id="KW-1185">Reference proteome</keyword>
<organism>
    <name type="scientific">Caenorhabditis briggsae</name>
    <dbReference type="NCBI Taxonomy" id="6238"/>
    <lineage>
        <taxon>Eukaryota</taxon>
        <taxon>Metazoa</taxon>
        <taxon>Ecdysozoa</taxon>
        <taxon>Nematoda</taxon>
        <taxon>Chromadorea</taxon>
        <taxon>Rhabditida</taxon>
        <taxon>Rhabditina</taxon>
        <taxon>Rhabditomorpha</taxon>
        <taxon>Rhabditoidea</taxon>
        <taxon>Rhabditidae</taxon>
        <taxon>Peloderinae</taxon>
        <taxon>Caenorhabditis</taxon>
    </lineage>
</organism>
<protein>
    <recommendedName>
        <fullName>ADP-ribosylation factor-like protein 2</fullName>
    </recommendedName>
    <alternativeName>
        <fullName>Abnormal eversion of vulva protein 20</fullName>
    </alternativeName>
</protein>